<protein>
    <recommendedName>
        <fullName>Matrix Gla protein</fullName>
        <shortName>MGP</shortName>
    </recommendedName>
</protein>
<evidence type="ECO:0000250" key="1">
    <source>
        <dbReference type="UniProtKB" id="P07507"/>
    </source>
</evidence>
<evidence type="ECO:0000250" key="2">
    <source>
        <dbReference type="UniProtKB" id="P56620"/>
    </source>
</evidence>
<evidence type="ECO:0000255" key="3">
    <source>
        <dbReference type="PROSITE-ProRule" id="PRU00463"/>
    </source>
</evidence>
<evidence type="ECO:0000269" key="4">
    <source>
    </source>
</evidence>
<evidence type="ECO:0000269" key="5">
    <source>
    </source>
</evidence>
<evidence type="ECO:0000305" key="6"/>
<evidence type="ECO:0000312" key="7">
    <source>
        <dbReference type="EMBL" id="AAO48723.1"/>
    </source>
</evidence>
<dbReference type="EMBL" id="AF334473">
    <property type="protein sequence ID" value="AAO48723.1"/>
    <property type="molecule type" value="mRNA"/>
</dbReference>
<dbReference type="SMR" id="Q800Y2"/>
<dbReference type="iPTMnet" id="Q800Y2"/>
<dbReference type="GO" id="GO:0062023">
    <property type="term" value="C:collagen-containing extracellular matrix"/>
    <property type="evidence" value="ECO:0000314"/>
    <property type="project" value="UniProtKB"/>
</dbReference>
<dbReference type="GO" id="GO:0005576">
    <property type="term" value="C:extracellular region"/>
    <property type="evidence" value="ECO:0007669"/>
    <property type="project" value="UniProtKB-SubCell"/>
</dbReference>
<dbReference type="GO" id="GO:0005509">
    <property type="term" value="F:calcium ion binding"/>
    <property type="evidence" value="ECO:0007669"/>
    <property type="project" value="InterPro"/>
</dbReference>
<dbReference type="GO" id="GO:0051216">
    <property type="term" value="P:cartilage development"/>
    <property type="evidence" value="ECO:0007669"/>
    <property type="project" value="UniProtKB-KW"/>
</dbReference>
<dbReference type="GO" id="GO:0030154">
    <property type="term" value="P:cell differentiation"/>
    <property type="evidence" value="ECO:0007669"/>
    <property type="project" value="UniProtKB-KW"/>
</dbReference>
<dbReference type="GO" id="GO:0030502">
    <property type="term" value="P:negative regulation of bone mineralization"/>
    <property type="evidence" value="ECO:0000304"/>
    <property type="project" value="UniProtKB"/>
</dbReference>
<dbReference type="GO" id="GO:0001503">
    <property type="term" value="P:ossification"/>
    <property type="evidence" value="ECO:0007669"/>
    <property type="project" value="UniProtKB-KW"/>
</dbReference>
<dbReference type="InterPro" id="IPR035972">
    <property type="entry name" value="GLA-like_dom_SF"/>
</dbReference>
<dbReference type="InterPro" id="IPR000294">
    <property type="entry name" value="GLA_domain"/>
</dbReference>
<dbReference type="InterPro" id="IPR027118">
    <property type="entry name" value="MGP"/>
</dbReference>
<dbReference type="PANTHER" id="PTHR10109">
    <property type="entry name" value="MATRIX GLA PROTEIN"/>
    <property type="match status" value="1"/>
</dbReference>
<dbReference type="PANTHER" id="PTHR10109:SF0">
    <property type="entry name" value="MATRIX GLA PROTEIN"/>
    <property type="match status" value="1"/>
</dbReference>
<dbReference type="SMART" id="SM00069">
    <property type="entry name" value="GLA"/>
    <property type="match status" value="1"/>
</dbReference>
<dbReference type="SUPFAM" id="SSF57630">
    <property type="entry name" value="GLA-domain"/>
    <property type="match status" value="1"/>
</dbReference>
<dbReference type="PROSITE" id="PS50998">
    <property type="entry name" value="GLA_2"/>
    <property type="match status" value="1"/>
</dbReference>
<sequence length="118" mass="13393">MRSLLQFLALSAAIALCVCYESHESSESAEDLFVPPQQANSFMTPQRGNAYSPPRGNGNNFNLMRTVKSPAERRAETCEDYSPCRFYAYRHGFQQAYQRYFGSGTHPQQRPAAAARRY</sequence>
<feature type="signal peptide" evidence="4 5">
    <location>
        <begin position="1"/>
        <end position="19"/>
    </location>
</feature>
<feature type="chain" id="PRO_0000011118" description="Matrix Gla protein">
    <location>
        <begin position="20"/>
        <end position="118"/>
    </location>
</feature>
<feature type="domain" description="Gla" evidence="3">
    <location>
        <begin position="56"/>
        <end position="102"/>
    </location>
</feature>
<feature type="modified residue" description="4-carboxyglutamate" evidence="3 5">
    <location>
        <position position="21"/>
    </location>
</feature>
<feature type="modified residue" description="Phosphoserine" evidence="4">
    <location>
        <position position="22"/>
    </location>
</feature>
<feature type="modified residue" description="Phosphoserine" evidence="4">
    <location>
        <position position="25"/>
    </location>
</feature>
<feature type="modified residue" description="Phosphoserine" evidence="4">
    <location>
        <position position="26"/>
    </location>
</feature>
<feature type="modified residue" description="Phosphoserine" evidence="4">
    <location>
        <position position="28"/>
    </location>
</feature>
<feature type="modified residue" description="4-carboxyglutamate" evidence="2 3">
    <location>
        <position position="72"/>
    </location>
</feature>
<feature type="modified residue" description="4-carboxyglutamate" evidence="2 3">
    <location>
        <position position="76"/>
    </location>
</feature>
<feature type="modified residue" description="4-carboxyglutamate" evidence="2 3">
    <location>
        <position position="79"/>
    </location>
</feature>
<feature type="disulfide bond" evidence="1 3">
    <location>
        <begin position="78"/>
        <end position="84"/>
    </location>
</feature>
<feature type="sequence conflict" description="In Ref. 1; AA sequence." evidence="6" ref="1">
    <original>P</original>
    <variation>G</variation>
    <location>
        <position position="54"/>
    </location>
</feature>
<gene>
    <name type="primary">mgp</name>
</gene>
<organism>
    <name type="scientific">Argyrosomus regius</name>
    <name type="common">Meagre</name>
    <dbReference type="NCBI Taxonomy" id="172269"/>
    <lineage>
        <taxon>Eukaryota</taxon>
        <taxon>Metazoa</taxon>
        <taxon>Chordata</taxon>
        <taxon>Craniata</taxon>
        <taxon>Vertebrata</taxon>
        <taxon>Euteleostomi</taxon>
        <taxon>Actinopterygii</taxon>
        <taxon>Neopterygii</taxon>
        <taxon>Teleostei</taxon>
        <taxon>Neoteleostei</taxon>
        <taxon>Acanthomorphata</taxon>
        <taxon>Eupercaria</taxon>
        <taxon>Sciaenidae</taxon>
        <taxon>Argyrosomus</taxon>
    </lineage>
</organism>
<proteinExistence type="evidence at protein level"/>
<keyword id="KW-0891">Chondrogenesis</keyword>
<keyword id="KW-0217">Developmental protein</keyword>
<keyword id="KW-0221">Differentiation</keyword>
<keyword id="KW-0903">Direct protein sequencing</keyword>
<keyword id="KW-1015">Disulfide bond</keyword>
<keyword id="KW-0301">Gamma-carboxyglutamic acid</keyword>
<keyword id="KW-0892">Osteogenesis</keyword>
<keyword id="KW-0597">Phosphoprotein</keyword>
<keyword id="KW-0964">Secreted</keyword>
<keyword id="KW-0732">Signal</keyword>
<comment type="function">
    <text>Associates with the organic matrix of calcified cartilage.</text>
</comment>
<comment type="subcellular location">
    <subcellularLocation>
        <location evidence="6">Secreted</location>
    </subcellularLocation>
</comment>
<comment type="tissue specificity">
    <text evidence="4">Expressed in heart, calcified cartilage (branchial arches), vertebra, gills and kidney. Within the gills, MGP is found mainly in the proliferating chondrocytes and the pericellular cartilage matrix in the incipient calcified cartilage of branchial arches and filaments.</text>
</comment>
<comment type="PTM">
    <text evidence="6">Requires vitamin K-dependent gamma-carboxylation for its function.</text>
</comment>
<comment type="similarity">
    <text evidence="6">Belongs to the osteocalcin/matrix Gla protein family.</text>
</comment>
<reference evidence="6 7" key="1">
    <citation type="journal article" date="2003" name="J. Bone Miner. Res.">
        <title>Purification of matrix Gla protein from a marine teleost fish, Argyrosomus regius: calcified cartilage and not bone as the primary site of MGP accumulation in fish.</title>
        <authorList>
            <person name="Simes D.C."/>
            <person name="Williamson M.K."/>
            <person name="Ortiz-Delgado J.B."/>
            <person name="Viegas C.S."/>
            <person name="Price P.A."/>
            <person name="Cancela M.L."/>
        </authorList>
    </citation>
    <scope>NUCLEOTIDE SEQUENCE [MRNA]</scope>
    <scope>PROTEIN SEQUENCE OF 20-56</scope>
    <scope>TISSUE SPECIFICITY</scope>
    <scope>PHOSPHORYLATION AT SER-22; SER-25; SER-26 AND SER-28</scope>
    <source>
        <tissue evidence="4">Cartilage</tissue>
        <tissue evidence="4">Kidney</tissue>
    </source>
</reference>
<reference evidence="6" key="2">
    <citation type="journal article" date="2004" name="Calcif. Tissue Int.">
        <title>Characterization of osteocalcin (BGP) and matrix Gla protein (MGP) fish specific antibodies: validation for immunodetection studies in lower vertebrates.</title>
        <authorList>
            <person name="Simes D.C."/>
            <person name="Williamson M.K."/>
            <person name="Schaff B.J."/>
            <person name="Gavaia P.J."/>
            <person name="Ingleton P.M."/>
            <person name="Price P.A."/>
            <person name="Cancela M.L."/>
        </authorList>
    </citation>
    <scope>PROTEIN SEQUENCE OF 20-48</scope>
    <scope>GAMMA-CARBOXYGLUTAMATION AT GLU-21</scope>
    <source>
        <tissue>Cartilage</tissue>
    </source>
</reference>
<accession>Q800Y2</accession>
<name>MGP_ARGRE</name>